<gene>
    <name type="primary">DCN</name>
    <name type="synonym">SLRR1B</name>
</gene>
<sequence length="359" mass="39747">MKATIILLLLAQVSWAGPFQQRGLFDFMLEDEASGIGPEVPDDRDFEPSLGPVCPFRCQCHLRVVQCSDLGLDKVPKDLPPDTTLLDLQNNKITEIKDGDFKNLKNLHALILVNNKISKVSPGAFTPLVKLERLYLSKNQLKELPEKMPKTLQELRAHENEITKVRKVTFNGLNQMIVIELGTNPLKSSGIENGAFQGMKKLSYIRIADTNITSIPQGLPPSLTELHLDGNKISRVDAASLKGLNNLAKLGLSFNSISAVDNGSLANTPHLRELHLDNNKLTRVPGGLAEHKYIQVVYLHNNNISVVGSSDFCPPGHNTKKASYSGVSLFSNPVQYWEIQPSTFRCVYVRSAIQLGNYK</sequence>
<reference key="1">
    <citation type="journal article" date="1986" name="Proc. Natl. Acad. Sci. U.S.A.">
        <title>Primary structure of an extracellular matrix proteoglycan core protein deduced from cloned cDNA.</title>
        <authorList>
            <person name="Krusius T."/>
            <person name="Ruoslahti E."/>
        </authorList>
    </citation>
    <scope>NUCLEOTIDE SEQUENCE [MRNA]</scope>
</reference>
<reference key="2">
    <citation type="journal article" date="1993" name="Genomics">
        <title>Human decorin gene: intron-exon junctions and chromosomal localization.</title>
        <authorList>
            <person name="Vetter U."/>
            <person name="Vogel W."/>
            <person name="Just W."/>
            <person name="Young M.F."/>
            <person name="Fisher L.W."/>
        </authorList>
    </citation>
    <scope>NUCLEOTIDE SEQUENCE [GENOMIC DNA]</scope>
    <source>
        <tissue>Lung</tissue>
    </source>
</reference>
<reference key="3">
    <citation type="journal article" date="1993" name="Genomics">
        <title>The human decorin gene: intron-exon organization, discovery of two alternatively spliced exons in the 5' untranslated region, and mapping of the gene to chromosome 12q23.</title>
        <authorList>
            <person name="Danielson K.G."/>
            <person name="Fazzio A."/>
            <person name="Cohen I.R."/>
            <person name="Cannizzaro L."/>
            <person name="Iozzo R.V."/>
        </authorList>
    </citation>
    <scope>NUCLEOTIDE SEQUENCE [GENOMIC DNA] OF 1-70</scope>
</reference>
<reference key="4">
    <citation type="submission" date="1999-03" db="EMBL/GenBank/DDBJ databases">
        <title>Alternative splicing of human decorin.</title>
        <authorList>
            <person name="Cs-Szabo G."/>
            <person name="Glant T.T."/>
        </authorList>
    </citation>
    <scope>NUCLEOTIDE SEQUENCE [MRNA] (ISOFORMS A; B; C; D AND E)</scope>
</reference>
<reference key="5">
    <citation type="submission" date="2003-05" db="EMBL/GenBank/DDBJ databases">
        <title>Cloning of human full-length CDSs in BD Creator(TM) system donor vector.</title>
        <authorList>
            <person name="Kalnine N."/>
            <person name="Chen X."/>
            <person name="Rolfs A."/>
            <person name="Halleck A."/>
            <person name="Hines L."/>
            <person name="Eisenstein S."/>
            <person name="Koundinya M."/>
            <person name="Raphael J."/>
            <person name="Moreira D."/>
            <person name="Kelley T."/>
            <person name="LaBaer J."/>
            <person name="Lin Y."/>
            <person name="Phelan M."/>
            <person name="Farmer A."/>
        </authorList>
    </citation>
    <scope>NUCLEOTIDE SEQUENCE [LARGE SCALE MRNA] (ISOFORM A)</scope>
</reference>
<reference key="6">
    <citation type="submission" date="2002-03" db="EMBL/GenBank/DDBJ databases">
        <authorList>
            <consortium name="SeattleSNPs variation discovery resource"/>
        </authorList>
    </citation>
    <scope>NUCLEOTIDE SEQUENCE [GENOMIC DNA]</scope>
    <scope>VARIANT MET-268</scope>
</reference>
<reference key="7">
    <citation type="journal article" date="2004" name="Genome Res.">
        <title>The status, quality, and expansion of the NIH full-length cDNA project: the Mammalian Gene Collection (MGC).</title>
        <authorList>
            <consortium name="The MGC Project Team"/>
        </authorList>
    </citation>
    <scope>NUCLEOTIDE SEQUENCE [LARGE SCALE MRNA]</scope>
    <source>
        <tissue>Liver</tissue>
    </source>
</reference>
<reference key="8">
    <citation type="journal article" date="1989" name="Biochem. J.">
        <title>Dermatan sulphate proteoglycans of human articular cartilage. The properties of dermatan sulphate proteoglycans I and II.</title>
        <authorList>
            <person name="Roughley P.J."/>
            <person name="White R.J."/>
        </authorList>
    </citation>
    <scope>PROTEIN SEQUENCE OF 31-50</scope>
</reference>
<reference key="9">
    <citation type="journal article" date="1987" name="J. Biol. Chem.">
        <title>Purification and partial characterization of small proteoglycans I and II, bone sialoproteins I and II, and osteonectin from the mineral compartment of developing human bone.</title>
        <authorList>
            <person name="Fisher L.W."/>
            <person name="Hawkins G.R."/>
            <person name="Tuross N."/>
            <person name="Termine J.D."/>
        </authorList>
    </citation>
    <scope>PROTEIN SEQUENCE OF 31-49</scope>
</reference>
<reference key="10">
    <citation type="journal article" date="2005" name="Invest. Ophthalmol. Vis. Sci.">
        <title>Congenital stromal dystrophy of the cornea caused by a mutation in the decorin gene.</title>
        <authorList>
            <person name="Bredrup C."/>
            <person name="Knappskog P.M."/>
            <person name="Majewski J."/>
            <person name="Rodahl E."/>
            <person name="Boman H."/>
        </authorList>
    </citation>
    <scope>INVOLVEMENT IN CSCD</scope>
</reference>
<reference key="11">
    <citation type="journal article" date="2009" name="J. Proteome Res.">
        <title>Glycoproteomics analysis of human liver tissue by combination of multiple enzyme digestion and hydrazide chemistry.</title>
        <authorList>
            <person name="Chen R."/>
            <person name="Jiang X."/>
            <person name="Sun D."/>
            <person name="Han G."/>
            <person name="Wang F."/>
            <person name="Ye M."/>
            <person name="Wang L."/>
            <person name="Zou H."/>
        </authorList>
    </citation>
    <scope>GLYCOSYLATION [LARGE SCALE ANALYSIS] AT ASN-211 AND ASN-262</scope>
    <source>
        <tissue>Liver</tissue>
    </source>
</reference>
<reference key="12">
    <citation type="journal article" date="2014" name="J. Proteomics">
        <title>An enzyme assisted RP-RPLC approach for in-depth analysis of human liver phosphoproteome.</title>
        <authorList>
            <person name="Bian Y."/>
            <person name="Song C."/>
            <person name="Cheng K."/>
            <person name="Dong M."/>
            <person name="Wang F."/>
            <person name="Huang J."/>
            <person name="Sun D."/>
            <person name="Wang L."/>
            <person name="Ye M."/>
            <person name="Zou H."/>
        </authorList>
    </citation>
    <scope>IDENTIFICATION BY MASS SPECTROMETRY [LARGE SCALE ANALYSIS]</scope>
    <source>
        <tissue>Liver</tissue>
    </source>
</reference>
<reference key="13">
    <citation type="journal article" date="2015" name="Mol. Cell. Proteomics">
        <title>Identification of chondroitin sulfate linkage region glycopeptides reveals prohormones as a novel class of proteoglycans.</title>
        <authorList>
            <person name="Noborn F."/>
            <person name="Gomez Toledo A."/>
            <person name="Sihlbom C."/>
            <person name="Lengqvist J."/>
            <person name="Fries E."/>
            <person name="Kjellen L."/>
            <person name="Nilsson J."/>
            <person name="Larson G."/>
        </authorList>
    </citation>
    <scope>SUBCELLULAR LOCATION</scope>
    <scope>TISSUE SPECIFICITY</scope>
    <scope>GLYCOSYLATION AT SER-34</scope>
</reference>
<reference key="14">
    <citation type="journal article" date="2020" name="Glycobiology">
        <title>An affinity chromatography and glycoproteomics workflow to profile the chondroitin sulfate proteoglycans that interact with malarial VAR2CSA in the placenta and in cancer.</title>
        <authorList>
            <person name="Toledo A.G."/>
            <person name="Pihl J."/>
            <person name="Spliid C.B."/>
            <person name="Persson A."/>
            <person name="Nilsson J."/>
            <person name="Pereira M.A."/>
            <person name="Gustavsson T."/>
            <person name="Choudhary S."/>
            <person name="Oo H.Z."/>
            <person name="Black P.C."/>
            <person name="Daugaard M."/>
            <person name="Esko J.D."/>
            <person name="Larson G."/>
            <person name="Salanti A."/>
            <person name="Clausen T.M."/>
        </authorList>
    </citation>
    <scope>TISSUE SPECIFICITY</scope>
    <scope>GLYCOSYLATION AT SER-34</scope>
</reference>
<reference key="15">
    <citation type="journal article" date="2022" name="J. Proteins Proteom.">
        <title>Mass spectrometric analysis of chondroitin sulfate-linked peptides.</title>
        <authorList>
            <person name="Ramarajan M.G."/>
            <person name="Saraswat M."/>
            <person name="Budhraja R."/>
            <person name="Garapati K."/>
            <person name="Raymond K."/>
            <person name="Pandey A."/>
        </authorList>
    </citation>
    <scope>SUBCELLULAR LOCATION</scope>
    <scope>TISSUE SPECIFICITY</scope>
    <scope>GLYCOSYLATION AT SER-34</scope>
</reference>
<reference key="16">
    <citation type="journal article" date="2023" name="Mol. Cell. Proteomics">
        <title>Mapping the Human Chondroitin Sulfate Glycoproteome Reveals an Unexpected Correlation Between Glycan Sulfation and Attachment Site Characteristics.</title>
        <authorList>
            <person name="Noborn F."/>
            <person name="Nilsson J."/>
            <person name="Sihlbom C."/>
            <person name="Nikpour M."/>
            <person name="Kjellen L."/>
            <person name="Larson G."/>
        </authorList>
    </citation>
    <scope>SUBCELLULAR LOCATION</scope>
    <scope>TISSUE SPECIFICITY</scope>
    <scope>GLYCOSYLATION AT SER-34</scope>
</reference>
<protein>
    <recommendedName>
        <fullName>Decorin</fullName>
    </recommendedName>
    <alternativeName>
        <fullName>Bone proteoglycan II</fullName>
    </alternativeName>
    <alternativeName>
        <fullName>PG-S2</fullName>
    </alternativeName>
    <alternativeName>
        <fullName>PG40</fullName>
    </alternativeName>
</protein>
<dbReference type="EMBL" id="M14219">
    <property type="protein sequence ID" value="AAB00774.1"/>
    <property type="molecule type" value="mRNA"/>
</dbReference>
<dbReference type="EMBL" id="L01131">
    <property type="protein sequence ID" value="AAA52301.1"/>
    <property type="status" value="ALT_SEQ"/>
    <property type="molecule type" value="Genomic_DNA"/>
</dbReference>
<dbReference type="EMBL" id="L01125">
    <property type="protein sequence ID" value="AAA52301.1"/>
    <property type="status" value="JOINED"/>
    <property type="molecule type" value="Genomic_DNA"/>
</dbReference>
<dbReference type="EMBL" id="L01126">
    <property type="protein sequence ID" value="AAA52301.1"/>
    <property type="status" value="JOINED"/>
    <property type="molecule type" value="Genomic_DNA"/>
</dbReference>
<dbReference type="EMBL" id="L01127">
    <property type="protein sequence ID" value="AAA52301.1"/>
    <property type="status" value="JOINED"/>
    <property type="molecule type" value="Genomic_DNA"/>
</dbReference>
<dbReference type="EMBL" id="L01129">
    <property type="protein sequence ID" value="AAA52301.1"/>
    <property type="status" value="JOINED"/>
    <property type="molecule type" value="Genomic_DNA"/>
</dbReference>
<dbReference type="EMBL" id="L01130">
    <property type="protein sequence ID" value="AAA52301.1"/>
    <property type="status" value="JOINED"/>
    <property type="molecule type" value="Genomic_DNA"/>
</dbReference>
<dbReference type="EMBL" id="AH005442">
    <property type="protein sequence ID" value="AAB60901.1"/>
    <property type="molecule type" value="Genomic_DNA"/>
</dbReference>
<dbReference type="EMBL" id="AF138300">
    <property type="protein sequence ID" value="AAD44713.1"/>
    <property type="molecule type" value="mRNA"/>
</dbReference>
<dbReference type="EMBL" id="AF138301">
    <property type="protein sequence ID" value="AAF61437.1"/>
    <property type="molecule type" value="mRNA"/>
</dbReference>
<dbReference type="EMBL" id="AF138302">
    <property type="protein sequence ID" value="AAD44714.1"/>
    <property type="molecule type" value="mRNA"/>
</dbReference>
<dbReference type="EMBL" id="AF138303">
    <property type="protein sequence ID" value="AAF61438.1"/>
    <property type="molecule type" value="mRNA"/>
</dbReference>
<dbReference type="EMBL" id="AF138304">
    <property type="protein sequence ID" value="AAD44715.1"/>
    <property type="molecule type" value="mRNA"/>
</dbReference>
<dbReference type="EMBL" id="BT019800">
    <property type="protein sequence ID" value="AAV38603.1"/>
    <property type="molecule type" value="mRNA"/>
</dbReference>
<dbReference type="EMBL" id="AF491944">
    <property type="protein sequence ID" value="AAL92176.1"/>
    <property type="molecule type" value="Genomic_DNA"/>
</dbReference>
<dbReference type="EMBL" id="BC005322">
    <property type="protein sequence ID" value="AAH05322.1"/>
    <property type="molecule type" value="mRNA"/>
</dbReference>
<dbReference type="CCDS" id="CCDS44951.1">
    <molecule id="P07585-5"/>
</dbReference>
<dbReference type="CCDS" id="CCDS9039.1">
    <molecule id="P07585-1"/>
</dbReference>
<dbReference type="CCDS" id="CCDS9040.1">
    <molecule id="P07585-2"/>
</dbReference>
<dbReference type="CCDS" id="CCDS9041.1">
    <molecule id="P07585-3"/>
</dbReference>
<dbReference type="CCDS" id="CCDS9042.1">
    <molecule id="P07585-4"/>
</dbReference>
<dbReference type="PIR" id="A45016">
    <property type="entry name" value="NBHUC8"/>
</dbReference>
<dbReference type="PIR" id="B28457">
    <property type="entry name" value="B28457"/>
</dbReference>
<dbReference type="RefSeq" id="NP_001911.1">
    <molecule id="P07585-1"/>
    <property type="nucleotide sequence ID" value="NM_001920.5"/>
</dbReference>
<dbReference type="RefSeq" id="NP_598010.1">
    <molecule id="P07585-1"/>
    <property type="nucleotide sequence ID" value="NM_133503.4"/>
</dbReference>
<dbReference type="RefSeq" id="NP_598011.1">
    <molecule id="P07585-2"/>
    <property type="nucleotide sequence ID" value="NM_133504.3"/>
</dbReference>
<dbReference type="RefSeq" id="NP_598012.1">
    <molecule id="P07585-3"/>
    <property type="nucleotide sequence ID" value="NM_133505.3"/>
</dbReference>
<dbReference type="RefSeq" id="NP_598013.1">
    <molecule id="P07585-4"/>
    <property type="nucleotide sequence ID" value="NM_133506.3"/>
</dbReference>
<dbReference type="RefSeq" id="NP_598014.1">
    <molecule id="P07585-5"/>
    <property type="nucleotide sequence ID" value="NM_133507.3"/>
</dbReference>
<dbReference type="RefSeq" id="XP_005268750.1">
    <property type="nucleotide sequence ID" value="XM_005268693.1"/>
</dbReference>
<dbReference type="RefSeq" id="XP_006719333.1">
    <property type="nucleotide sequence ID" value="XM_006719270.1"/>
</dbReference>
<dbReference type="RefSeq" id="XP_016874406.1">
    <property type="nucleotide sequence ID" value="XM_017018917.1"/>
</dbReference>
<dbReference type="SMR" id="P07585"/>
<dbReference type="BioGRID" id="108002">
    <property type="interactions" value="26"/>
</dbReference>
<dbReference type="FunCoup" id="P07585">
    <property type="interactions" value="304"/>
</dbReference>
<dbReference type="IntAct" id="P07585">
    <property type="interactions" value="19"/>
</dbReference>
<dbReference type="STRING" id="9606.ENSP00000052754"/>
<dbReference type="GlyConnect" id="1169">
    <property type="glycosylation" value="69 N-Linked glycans (3 sites)"/>
</dbReference>
<dbReference type="GlyCosmos" id="P07585">
    <property type="glycosylation" value="4 sites, 68 glycans"/>
</dbReference>
<dbReference type="GlyGen" id="P07585">
    <property type="glycosylation" value="8 sites, 194 N-linked glycans (3 sites), 1 O-linked glycan (1 site)"/>
</dbReference>
<dbReference type="iPTMnet" id="P07585"/>
<dbReference type="PhosphoSitePlus" id="P07585"/>
<dbReference type="SwissPalm" id="P07585"/>
<dbReference type="BioMuta" id="DCN"/>
<dbReference type="DMDM" id="129951"/>
<dbReference type="jPOST" id="P07585"/>
<dbReference type="MassIVE" id="P07585"/>
<dbReference type="PaxDb" id="9606-ENSP00000052754"/>
<dbReference type="PeptideAtlas" id="P07585"/>
<dbReference type="ProteomicsDB" id="52014">
    <molecule id="P07585-1"/>
</dbReference>
<dbReference type="ProteomicsDB" id="52015">
    <molecule id="P07585-2"/>
</dbReference>
<dbReference type="ProteomicsDB" id="52016">
    <molecule id="P07585-3"/>
</dbReference>
<dbReference type="ProteomicsDB" id="52017">
    <molecule id="P07585-4"/>
</dbReference>
<dbReference type="ProteomicsDB" id="52018">
    <molecule id="P07585-5"/>
</dbReference>
<dbReference type="Antibodypedia" id="754">
    <property type="antibodies" value="649 antibodies from 40 providers"/>
</dbReference>
<dbReference type="DNASU" id="1634"/>
<dbReference type="Ensembl" id="ENST00000052754.10">
    <molecule id="P07585-1"/>
    <property type="protein sequence ID" value="ENSP00000052754.5"/>
    <property type="gene ID" value="ENSG00000011465.18"/>
</dbReference>
<dbReference type="Ensembl" id="ENST00000420120.6">
    <molecule id="P07585-2"/>
    <property type="protein sequence ID" value="ENSP00000413723.2"/>
    <property type="gene ID" value="ENSG00000011465.18"/>
</dbReference>
<dbReference type="Ensembl" id="ENST00000425043.5">
    <molecule id="P07585-3"/>
    <property type="protein sequence ID" value="ENSP00000401021.1"/>
    <property type="gene ID" value="ENSG00000011465.18"/>
</dbReference>
<dbReference type="Ensembl" id="ENST00000441303.6">
    <molecule id="P07585-4"/>
    <property type="protein sequence ID" value="ENSP00000399815.2"/>
    <property type="gene ID" value="ENSG00000011465.18"/>
</dbReference>
<dbReference type="Ensembl" id="ENST00000456569.2">
    <molecule id="P07585-5"/>
    <property type="protein sequence ID" value="ENSP00000398514.2"/>
    <property type="gene ID" value="ENSG00000011465.18"/>
</dbReference>
<dbReference type="Ensembl" id="ENST00000547568.6">
    <molecule id="P07585-3"/>
    <property type="protein sequence ID" value="ENSP00000447674.2"/>
    <property type="gene ID" value="ENSG00000011465.18"/>
</dbReference>
<dbReference type="Ensembl" id="ENST00000552962.5">
    <molecule id="P07585-1"/>
    <property type="protein sequence ID" value="ENSP00000447654.1"/>
    <property type="gene ID" value="ENSG00000011465.18"/>
</dbReference>
<dbReference type="GeneID" id="1634"/>
<dbReference type="KEGG" id="hsa:1634"/>
<dbReference type="MANE-Select" id="ENST00000052754.10">
    <property type="protein sequence ID" value="ENSP00000052754.5"/>
    <property type="RefSeq nucleotide sequence ID" value="NM_001920.5"/>
    <property type="RefSeq protein sequence ID" value="NP_001911.1"/>
</dbReference>
<dbReference type="UCSC" id="uc001tbo.4">
    <molecule id="P07585-1"/>
    <property type="organism name" value="human"/>
</dbReference>
<dbReference type="AGR" id="HGNC:2705"/>
<dbReference type="CTD" id="1634"/>
<dbReference type="DisGeNET" id="1634"/>
<dbReference type="GeneCards" id="DCN"/>
<dbReference type="GeneReviews" id="DCN"/>
<dbReference type="HGNC" id="HGNC:2705">
    <property type="gene designation" value="DCN"/>
</dbReference>
<dbReference type="HPA" id="ENSG00000011465">
    <property type="expression patterns" value="Tissue enhanced (ovary)"/>
</dbReference>
<dbReference type="MalaCards" id="DCN"/>
<dbReference type="MIM" id="125255">
    <property type="type" value="gene"/>
</dbReference>
<dbReference type="MIM" id="610048">
    <property type="type" value="phenotype"/>
</dbReference>
<dbReference type="neXtProt" id="NX_P07585"/>
<dbReference type="OpenTargets" id="ENSG00000011465"/>
<dbReference type="Orphanet" id="101068">
    <property type="disease" value="Congenital stromal corneal dystrophy"/>
</dbReference>
<dbReference type="PharmGKB" id="PA27177"/>
<dbReference type="VEuPathDB" id="HostDB:ENSG00000011465"/>
<dbReference type="eggNOG" id="KOG0619">
    <property type="taxonomic scope" value="Eukaryota"/>
</dbReference>
<dbReference type="GeneTree" id="ENSGT00940000158382"/>
<dbReference type="HOGENOM" id="CLU_000288_186_0_1"/>
<dbReference type="InParanoid" id="P07585"/>
<dbReference type="OMA" id="FRCIYER"/>
<dbReference type="OrthoDB" id="1111193at2759"/>
<dbReference type="PAN-GO" id="P07585">
    <property type="GO annotations" value="1 GO annotation based on evolutionary models"/>
</dbReference>
<dbReference type="PhylomeDB" id="P07585"/>
<dbReference type="TreeFam" id="TF334562"/>
<dbReference type="PathwayCommons" id="P07585"/>
<dbReference type="Reactome" id="R-HSA-1474228">
    <property type="pathway name" value="Degradation of the extracellular matrix"/>
</dbReference>
<dbReference type="Reactome" id="R-HSA-1971475">
    <property type="pathway name" value="A tetrasaccharide linker sequence is required for GAG synthesis"/>
</dbReference>
<dbReference type="Reactome" id="R-HSA-2022870">
    <property type="pathway name" value="Chondroitin sulfate biosynthesis"/>
</dbReference>
<dbReference type="Reactome" id="R-HSA-2022923">
    <property type="pathway name" value="Dermatan sulfate biosynthesis"/>
</dbReference>
<dbReference type="Reactome" id="R-HSA-2024101">
    <property type="pathway name" value="CS/DS degradation"/>
</dbReference>
<dbReference type="Reactome" id="R-HSA-3000178">
    <property type="pathway name" value="ECM proteoglycans"/>
</dbReference>
<dbReference type="Reactome" id="R-HSA-3560783">
    <property type="pathway name" value="Defective B4GALT7 causes EDS, progeroid type"/>
</dbReference>
<dbReference type="Reactome" id="R-HSA-3560801">
    <property type="pathway name" value="Defective B3GAT3 causes JDSSDHD"/>
</dbReference>
<dbReference type="Reactome" id="R-HSA-3595172">
    <property type="pathway name" value="Defective CHST3 causes SEDCJD"/>
</dbReference>
<dbReference type="Reactome" id="R-HSA-3595174">
    <property type="pathway name" value="Defective CHST14 causes EDS, musculocontractural type"/>
</dbReference>
<dbReference type="Reactome" id="R-HSA-3595177">
    <property type="pathway name" value="Defective CHSY1 causes TPBS"/>
</dbReference>
<dbReference type="Reactome" id="R-HSA-4420332">
    <property type="pathway name" value="Defective B3GALT6 causes EDSP2 and SEMDJL1"/>
</dbReference>
<dbReference type="SignaLink" id="P07585"/>
<dbReference type="SIGNOR" id="P07585"/>
<dbReference type="BioGRID-ORCS" id="1634">
    <property type="hits" value="8 hits in 1159 CRISPR screens"/>
</dbReference>
<dbReference type="ChiTaRS" id="DCN">
    <property type="organism name" value="human"/>
</dbReference>
<dbReference type="GeneWiki" id="Decorin"/>
<dbReference type="GenomeRNAi" id="1634"/>
<dbReference type="Pharos" id="P07585">
    <property type="development level" value="Tbio"/>
</dbReference>
<dbReference type="PRO" id="PR:P07585"/>
<dbReference type="Proteomes" id="UP000005640">
    <property type="component" value="Chromosome 12"/>
</dbReference>
<dbReference type="RNAct" id="P07585">
    <property type="molecule type" value="protein"/>
</dbReference>
<dbReference type="Bgee" id="ENSG00000011465">
    <property type="expression patterns" value="Expressed in decidua and 209 other cell types or tissues"/>
</dbReference>
<dbReference type="ExpressionAtlas" id="P07585">
    <property type="expression patterns" value="baseline and differential"/>
</dbReference>
<dbReference type="GO" id="GO:0062023">
    <property type="term" value="C:collagen-containing extracellular matrix"/>
    <property type="evidence" value="ECO:0007005"/>
    <property type="project" value="BHF-UCL"/>
</dbReference>
<dbReference type="GO" id="GO:0005576">
    <property type="term" value="C:extracellular region"/>
    <property type="evidence" value="ECO:0007005"/>
    <property type="project" value="BHF-UCL"/>
</dbReference>
<dbReference type="GO" id="GO:0005615">
    <property type="term" value="C:extracellular space"/>
    <property type="evidence" value="ECO:0007005"/>
    <property type="project" value="BHF-UCL"/>
</dbReference>
<dbReference type="GO" id="GO:0005796">
    <property type="term" value="C:Golgi lumen"/>
    <property type="evidence" value="ECO:0000304"/>
    <property type="project" value="Reactome"/>
</dbReference>
<dbReference type="GO" id="GO:0043202">
    <property type="term" value="C:lysosomal lumen"/>
    <property type="evidence" value="ECO:0000304"/>
    <property type="project" value="Reactome"/>
</dbReference>
<dbReference type="GO" id="GO:0050840">
    <property type="term" value="F:extracellular matrix binding"/>
    <property type="evidence" value="ECO:0007669"/>
    <property type="project" value="Ensembl"/>
</dbReference>
<dbReference type="GO" id="GO:0030021">
    <property type="term" value="F:extracellular matrix structural constituent conferring compression resistance"/>
    <property type="evidence" value="ECO:0000250"/>
    <property type="project" value="BHF-UCL"/>
</dbReference>
<dbReference type="GO" id="GO:0005539">
    <property type="term" value="F:glycosaminoglycan binding"/>
    <property type="evidence" value="ECO:0007669"/>
    <property type="project" value="Ensembl"/>
</dbReference>
<dbReference type="GO" id="GO:0003723">
    <property type="term" value="F:RNA binding"/>
    <property type="evidence" value="ECO:0007005"/>
    <property type="project" value="UniProtKB"/>
</dbReference>
<dbReference type="GO" id="GO:0009887">
    <property type="term" value="P:animal organ morphogenesis"/>
    <property type="evidence" value="ECO:0000304"/>
    <property type="project" value="ProtInc"/>
</dbReference>
<dbReference type="GO" id="GO:0016525">
    <property type="term" value="P:negative regulation of angiogenesis"/>
    <property type="evidence" value="ECO:0000314"/>
    <property type="project" value="MGI"/>
</dbReference>
<dbReference type="GO" id="GO:0010596">
    <property type="term" value="P:negative regulation of endothelial cell migration"/>
    <property type="evidence" value="ECO:0000314"/>
    <property type="project" value="MGI"/>
</dbReference>
<dbReference type="GO" id="GO:1900747">
    <property type="term" value="P:negative regulation of vascular endothelial growth factor signaling pathway"/>
    <property type="evidence" value="ECO:0000314"/>
    <property type="project" value="MGI"/>
</dbReference>
<dbReference type="GO" id="GO:0010508">
    <property type="term" value="P:positive regulation of autophagy"/>
    <property type="evidence" value="ECO:0000314"/>
    <property type="project" value="CACAO"/>
</dbReference>
<dbReference type="GO" id="GO:0016239">
    <property type="term" value="P:positive regulation of macroautophagy"/>
    <property type="evidence" value="ECO:0000314"/>
    <property type="project" value="MGI"/>
</dbReference>
<dbReference type="GO" id="GO:0051901">
    <property type="term" value="P:positive regulation of mitochondrial depolarization"/>
    <property type="evidence" value="ECO:0000316"/>
    <property type="project" value="MGI"/>
</dbReference>
<dbReference type="GO" id="GO:0090141">
    <property type="term" value="P:positive regulation of mitochondrial fission"/>
    <property type="evidence" value="ECO:0000316"/>
    <property type="project" value="MGI"/>
</dbReference>
<dbReference type="GO" id="GO:0051897">
    <property type="term" value="P:positive regulation of phosphatidylinositol 3-kinase/protein kinase B signal transduction"/>
    <property type="evidence" value="ECO:0000314"/>
    <property type="project" value="MGI"/>
</dbReference>
<dbReference type="GO" id="GO:0045944">
    <property type="term" value="P:positive regulation of transcription by RNA polymerase II"/>
    <property type="evidence" value="ECO:0000316"/>
    <property type="project" value="MGI"/>
</dbReference>
<dbReference type="FunFam" id="3.80.10.10:FF:000038">
    <property type="entry name" value="Biglycan"/>
    <property type="match status" value="1"/>
</dbReference>
<dbReference type="Gene3D" id="3.80.10.10">
    <property type="entry name" value="Ribonuclease Inhibitor"/>
    <property type="match status" value="1"/>
</dbReference>
<dbReference type="InterPro" id="IPR001611">
    <property type="entry name" value="Leu-rich_rpt"/>
</dbReference>
<dbReference type="InterPro" id="IPR003591">
    <property type="entry name" value="Leu-rich_rpt_typical-subtyp"/>
</dbReference>
<dbReference type="InterPro" id="IPR032675">
    <property type="entry name" value="LRR_dom_sf"/>
</dbReference>
<dbReference type="InterPro" id="IPR000372">
    <property type="entry name" value="LRRNT"/>
</dbReference>
<dbReference type="InterPro" id="IPR050333">
    <property type="entry name" value="SLRP"/>
</dbReference>
<dbReference type="InterPro" id="IPR016352">
    <property type="entry name" value="SLRP_I_decor/aspor/byglycan"/>
</dbReference>
<dbReference type="PANTHER" id="PTHR45712">
    <property type="entry name" value="AGAP008170-PA"/>
    <property type="match status" value="1"/>
</dbReference>
<dbReference type="PANTHER" id="PTHR45712:SF14">
    <property type="entry name" value="DECORIN"/>
    <property type="match status" value="1"/>
</dbReference>
<dbReference type="Pfam" id="PF13855">
    <property type="entry name" value="LRR_8"/>
    <property type="match status" value="3"/>
</dbReference>
<dbReference type="Pfam" id="PF01462">
    <property type="entry name" value="LRRNT"/>
    <property type="match status" value="1"/>
</dbReference>
<dbReference type="PIRSF" id="PIRSF002490">
    <property type="entry name" value="SLRP_I"/>
    <property type="match status" value="1"/>
</dbReference>
<dbReference type="SMART" id="SM00364">
    <property type="entry name" value="LRR_BAC"/>
    <property type="match status" value="4"/>
</dbReference>
<dbReference type="SMART" id="SM00369">
    <property type="entry name" value="LRR_TYP"/>
    <property type="match status" value="6"/>
</dbReference>
<dbReference type="SMART" id="SM00013">
    <property type="entry name" value="LRRNT"/>
    <property type="match status" value="1"/>
</dbReference>
<dbReference type="SUPFAM" id="SSF52058">
    <property type="entry name" value="L domain-like"/>
    <property type="match status" value="1"/>
</dbReference>
<dbReference type="PROSITE" id="PS51450">
    <property type="entry name" value="LRR"/>
    <property type="match status" value="8"/>
</dbReference>
<evidence type="ECO:0000250" key="1"/>
<evidence type="ECO:0000250" key="2">
    <source>
        <dbReference type="UniProtKB" id="Q01129"/>
    </source>
</evidence>
<evidence type="ECO:0000255" key="3"/>
<evidence type="ECO:0000269" key="4">
    <source>
    </source>
</evidence>
<evidence type="ECO:0000269" key="5">
    <source>
    </source>
</evidence>
<evidence type="ECO:0000269" key="6">
    <source>
    </source>
</evidence>
<evidence type="ECO:0000269" key="7">
    <source>
    </source>
</evidence>
<evidence type="ECO:0000269" key="8">
    <source>
    </source>
</evidence>
<evidence type="ECO:0000269" key="9">
    <source>
    </source>
</evidence>
<evidence type="ECO:0000269" key="10">
    <source>
    </source>
</evidence>
<evidence type="ECO:0000269" key="11">
    <source>
    </source>
</evidence>
<evidence type="ECO:0000269" key="12">
    <source ref="6"/>
</evidence>
<evidence type="ECO:0000303" key="13">
    <source ref="4"/>
</evidence>
<evidence type="ECO:0000305" key="14"/>
<feature type="signal peptide" evidence="2">
    <location>
        <begin position="1"/>
        <end position="16"/>
    </location>
</feature>
<feature type="propeptide" id="PRO_0000032709" evidence="7 9">
    <location>
        <begin position="17"/>
        <end position="30"/>
    </location>
</feature>
<feature type="chain" id="PRO_0000032710" description="Decorin">
    <location>
        <begin position="31"/>
        <end position="359"/>
    </location>
</feature>
<feature type="repeat" description="LRR 1">
    <location>
        <begin position="73"/>
        <end position="93"/>
    </location>
</feature>
<feature type="repeat" description="LRR 2">
    <location>
        <begin position="94"/>
        <end position="117"/>
    </location>
</feature>
<feature type="repeat" description="LRR 3">
    <location>
        <begin position="118"/>
        <end position="141"/>
    </location>
</feature>
<feature type="repeat" description="LRR 4">
    <location>
        <begin position="142"/>
        <end position="162"/>
    </location>
</feature>
<feature type="repeat" description="LRR 5">
    <location>
        <begin position="163"/>
        <end position="186"/>
    </location>
</feature>
<feature type="repeat" description="LRR 6">
    <location>
        <begin position="187"/>
        <end position="212"/>
    </location>
</feature>
<feature type="repeat" description="LRR 7">
    <location>
        <begin position="213"/>
        <end position="233"/>
    </location>
</feature>
<feature type="repeat" description="LRR 8">
    <location>
        <begin position="234"/>
        <end position="257"/>
    </location>
</feature>
<feature type="repeat" description="LRR 9">
    <location>
        <begin position="258"/>
        <end position="281"/>
    </location>
</feature>
<feature type="repeat" description="LRR 10">
    <location>
        <begin position="282"/>
        <end position="304"/>
    </location>
</feature>
<feature type="repeat" description="LRR 11">
    <location>
        <begin position="305"/>
        <end position="334"/>
    </location>
</feature>
<feature type="repeat" description="LRR 12">
    <location>
        <begin position="335"/>
        <end position="359"/>
    </location>
</feature>
<feature type="glycosylation site" description="O-linked (Xyl...) (glycosaminoglycan) serine" evidence="6 8 10 11">
    <location>
        <position position="34"/>
    </location>
</feature>
<feature type="glycosylation site" description="N-linked (GlcNAc...) asparagine" evidence="5">
    <location>
        <position position="211"/>
    </location>
</feature>
<feature type="glycosylation site" description="N-linked (GlcNAc...) asparagine" evidence="5">
    <location>
        <position position="262"/>
    </location>
</feature>
<feature type="glycosylation site" description="N-linked (GlcNAc...) asparagine" evidence="3">
    <location>
        <position position="303"/>
    </location>
</feature>
<feature type="disulfide bond" evidence="1">
    <location>
        <begin position="54"/>
        <end position="60"/>
    </location>
</feature>
<feature type="disulfide bond" evidence="1">
    <location>
        <begin position="58"/>
        <end position="67"/>
    </location>
</feature>
<feature type="disulfide bond" evidence="1">
    <location>
        <begin position="313"/>
        <end position="346"/>
    </location>
</feature>
<feature type="splice variant" id="VSP_006172" description="In isoform B." evidence="13">
    <location>
        <begin position="71"/>
        <end position="179"/>
    </location>
</feature>
<feature type="splice variant" id="VSP_006175" description="In isoform E." evidence="13">
    <original>LDKV</original>
    <variation>CLPS</variation>
    <location>
        <begin position="72"/>
        <end position="75"/>
    </location>
</feature>
<feature type="splice variant" id="VSP_006173" description="In isoform C." evidence="13">
    <location>
        <begin position="73"/>
        <end position="219"/>
    </location>
</feature>
<feature type="splice variant" id="VSP_006176" description="In isoform E." evidence="13">
    <location>
        <begin position="76"/>
        <end position="359"/>
    </location>
</feature>
<feature type="splice variant" id="VSP_006174" description="In isoform D." evidence="13">
    <location>
        <begin position="109"/>
        <end position="295"/>
    </location>
</feature>
<feature type="sequence variant" id="VAR_014351" description="In dbSNP:rs3138268." evidence="12">
    <original>T</original>
    <variation>M</variation>
    <location>
        <position position="268"/>
    </location>
</feature>
<feature type="sequence variant" id="VAR_011975" description="In dbSNP:rs1803344.">
    <original>E</original>
    <variation>Q</variation>
    <location>
        <position position="273"/>
    </location>
</feature>
<feature type="sequence conflict" description="In Ref. 9; AA sequence." evidence="14" ref="9">
    <original>G</original>
    <variation>A</variation>
    <location>
        <position position="37"/>
    </location>
</feature>
<feature type="sequence conflict" description="In Ref. 9; AA sequence." evidence="14" ref="9">
    <original>D</original>
    <variation>P</variation>
    <location>
        <position position="45"/>
    </location>
</feature>
<organism>
    <name type="scientific">Homo sapiens</name>
    <name type="common">Human</name>
    <dbReference type="NCBI Taxonomy" id="9606"/>
    <lineage>
        <taxon>Eukaryota</taxon>
        <taxon>Metazoa</taxon>
        <taxon>Chordata</taxon>
        <taxon>Craniata</taxon>
        <taxon>Vertebrata</taxon>
        <taxon>Euteleostomi</taxon>
        <taxon>Mammalia</taxon>
        <taxon>Eutheria</taxon>
        <taxon>Euarchontoglires</taxon>
        <taxon>Primates</taxon>
        <taxon>Haplorrhini</taxon>
        <taxon>Catarrhini</taxon>
        <taxon>Hominidae</taxon>
        <taxon>Homo</taxon>
    </lineage>
</organism>
<keyword id="KW-0025">Alternative splicing</keyword>
<keyword id="KW-1212">Corneal dystrophy</keyword>
<keyword id="KW-0903">Direct protein sequencing</keyword>
<keyword id="KW-1015">Disulfide bond</keyword>
<keyword id="KW-0272">Extracellular matrix</keyword>
<keyword id="KW-0325">Glycoprotein</keyword>
<keyword id="KW-0433">Leucine-rich repeat</keyword>
<keyword id="KW-0654">Proteoglycan</keyword>
<keyword id="KW-1267">Proteomics identification</keyword>
<keyword id="KW-1185">Reference proteome</keyword>
<keyword id="KW-0677">Repeat</keyword>
<keyword id="KW-0964">Secreted</keyword>
<keyword id="KW-0732">Signal</keyword>
<comment type="function">
    <text>May affect the rate of fibrils formation.</text>
</comment>
<comment type="subunit">
    <text evidence="1">Binds to type I and type II collagen, fibronectin and TGF-beta. Forms a ternary complex with MFAP2 and ELN. Interacts with DPT (By similarity).</text>
</comment>
<comment type="interaction">
    <interactant intactId="EBI-9663608">
        <id>P07585</id>
    </interactant>
    <interactant intactId="EBI-12509497">
        <id>P13497-2</id>
        <label>BMP1</label>
    </interactant>
    <organismsDiffer>false</organismsDiffer>
    <experiments>2</experiments>
</comment>
<comment type="interaction">
    <interactant intactId="EBI-9663608">
        <id>P07585</id>
    </interactant>
    <interactant intactId="EBI-11090967">
        <id>O75063</id>
        <label>FAM20B</label>
    </interactant>
    <organismsDiffer>false</organismsDiffer>
    <experiments>4</experiments>
</comment>
<comment type="interaction">
    <interactant intactId="EBI-9663608">
        <id>P07585</id>
    </interactant>
    <interactant intactId="EBI-1220319">
        <id>P02751</id>
        <label>FN1</label>
    </interactant>
    <organismsDiffer>false</organismsDiffer>
    <experiments>9</experiments>
</comment>
<comment type="subcellular location">
    <subcellularLocation>
        <location>Secreted</location>
        <location>Extracellular space</location>
        <location>Extracellular matrix</location>
    </subcellularLocation>
    <subcellularLocation>
        <location evidence="6 10 11">Secreted</location>
    </subcellularLocation>
</comment>
<comment type="alternative products">
    <event type="alternative splicing"/>
    <isoform>
        <id>P07585-1</id>
        <name>A</name>
        <sequence type="displayed"/>
    </isoform>
    <isoform>
        <id>P07585-2</id>
        <name>B</name>
        <sequence type="described" ref="VSP_006172"/>
    </isoform>
    <isoform>
        <id>P07585-3</id>
        <name>C</name>
        <sequence type="described" ref="VSP_006173"/>
    </isoform>
    <isoform>
        <id>P07585-4</id>
        <name>D</name>
        <sequence type="described" ref="VSP_006174"/>
    </isoform>
    <isoform>
        <id>P07585-5</id>
        <name>E</name>
        <sequence type="described" ref="VSP_006175 VSP_006176"/>
    </isoform>
</comment>
<comment type="tissue specificity">
    <text evidence="6 8 10 11">Detected in placenta (at protein level) (PubMed:32337544). Detected in cerebrospinal fluid, fibroblasts and urine (at protein level) (PubMed:25326458, PubMed:36213313, PubMed:37453717).</text>
</comment>
<comment type="PTM">
    <text>The attached glycosaminoglycan chain can be either chondroitin sulfate or dermatan sulfate depending upon the tissue of origin.</text>
</comment>
<comment type="disease" evidence="4">
    <disease id="DI-01418">
        <name>Corneal dystrophy, congenital stromal</name>
        <acronym>CSCD</acronym>
        <description>A corneal dystrophy characterized by congenital corneal opacification consisting of a large number of flakes and spots throughout all layers of the stroma. It results in progressive, painless visual loss. Corneal erosions and photophobia are absent.</description>
        <dbReference type="MIM" id="610048"/>
    </disease>
    <text>The disease is caused by variants affecting the gene represented in this entry.</text>
</comment>
<comment type="similarity">
    <text evidence="14">Belongs to the small leucine-rich proteoglycan (SLRP) family. SLRP class I subfamily.</text>
</comment>
<name>PGS2_HUMAN</name>
<accession>P07585</accession>
<accession>Q9P0Z0</accession>
<accession>Q9P0Z1</accession>
<accession>Q9Y5N8</accession>
<accession>Q9Y5N9</accession>
<proteinExistence type="evidence at protein level"/>